<name>CMOB_SHEWM</name>
<comment type="function">
    <text evidence="1">Catalyzes carboxymethyl transfer from carboxy-S-adenosyl-L-methionine (Cx-SAM) to 5-hydroxyuridine (ho5U) to form 5-carboxymethoxyuridine (cmo5U) at position 34 in tRNAs.</text>
</comment>
<comment type="catalytic activity">
    <reaction evidence="1">
        <text>carboxy-S-adenosyl-L-methionine + 5-hydroxyuridine(34) in tRNA = 5-carboxymethoxyuridine(34) in tRNA + S-adenosyl-L-homocysteine + H(+)</text>
        <dbReference type="Rhea" id="RHEA:52848"/>
        <dbReference type="Rhea" id="RHEA-COMP:13381"/>
        <dbReference type="Rhea" id="RHEA-COMP:13383"/>
        <dbReference type="ChEBI" id="CHEBI:15378"/>
        <dbReference type="ChEBI" id="CHEBI:57856"/>
        <dbReference type="ChEBI" id="CHEBI:134278"/>
        <dbReference type="ChEBI" id="CHEBI:136877"/>
        <dbReference type="ChEBI" id="CHEBI:136879"/>
    </reaction>
</comment>
<comment type="subunit">
    <text evidence="1">Homotetramer.</text>
</comment>
<comment type="similarity">
    <text evidence="1">Belongs to the class I-like SAM-binding methyltransferase superfamily. CmoB family.</text>
</comment>
<reference key="1">
    <citation type="submission" date="2008-02" db="EMBL/GenBank/DDBJ databases">
        <title>Complete sequence of Shewanella woodyi ATCC 51908.</title>
        <authorList>
            <consortium name="US DOE Joint Genome Institute"/>
            <person name="Copeland A."/>
            <person name="Lucas S."/>
            <person name="Lapidus A."/>
            <person name="Glavina del Rio T."/>
            <person name="Dalin E."/>
            <person name="Tice H."/>
            <person name="Bruce D."/>
            <person name="Goodwin L."/>
            <person name="Pitluck S."/>
            <person name="Sims D."/>
            <person name="Brettin T."/>
            <person name="Detter J.C."/>
            <person name="Han C."/>
            <person name="Kuske C.R."/>
            <person name="Schmutz J."/>
            <person name="Larimer F."/>
            <person name="Land M."/>
            <person name="Hauser L."/>
            <person name="Kyrpides N."/>
            <person name="Lykidis A."/>
            <person name="Zhao J.-S."/>
            <person name="Richardson P."/>
        </authorList>
    </citation>
    <scope>NUCLEOTIDE SEQUENCE [LARGE SCALE GENOMIC DNA]</scope>
    <source>
        <strain>ATCC 51908 / MS32</strain>
    </source>
</reference>
<protein>
    <recommendedName>
        <fullName evidence="1">tRNA U34 carboxymethyltransferase</fullName>
        <ecNumber evidence="1">2.5.1.-</ecNumber>
    </recommendedName>
</protein>
<accession>B1KHH0</accession>
<proteinExistence type="inferred from homology"/>
<dbReference type="EC" id="2.5.1.-" evidence="1"/>
<dbReference type="EMBL" id="CP000961">
    <property type="protein sequence ID" value="ACA86855.1"/>
    <property type="molecule type" value="Genomic_DNA"/>
</dbReference>
<dbReference type="RefSeq" id="WP_012325195.1">
    <property type="nucleotide sequence ID" value="NC_010506.1"/>
</dbReference>
<dbReference type="SMR" id="B1KHH0"/>
<dbReference type="STRING" id="392500.Swoo_2578"/>
<dbReference type="KEGG" id="swd:Swoo_2578"/>
<dbReference type="eggNOG" id="COG0500">
    <property type="taxonomic scope" value="Bacteria"/>
</dbReference>
<dbReference type="HOGENOM" id="CLU_052665_0_0_6"/>
<dbReference type="Proteomes" id="UP000002168">
    <property type="component" value="Chromosome"/>
</dbReference>
<dbReference type="GO" id="GO:0008168">
    <property type="term" value="F:methyltransferase activity"/>
    <property type="evidence" value="ECO:0007669"/>
    <property type="project" value="TreeGrafter"/>
</dbReference>
<dbReference type="GO" id="GO:0016765">
    <property type="term" value="F:transferase activity, transferring alkyl or aryl (other than methyl) groups"/>
    <property type="evidence" value="ECO:0007669"/>
    <property type="project" value="UniProtKB-UniRule"/>
</dbReference>
<dbReference type="GO" id="GO:0002098">
    <property type="term" value="P:tRNA wobble uridine modification"/>
    <property type="evidence" value="ECO:0007669"/>
    <property type="project" value="InterPro"/>
</dbReference>
<dbReference type="CDD" id="cd02440">
    <property type="entry name" value="AdoMet_MTases"/>
    <property type="match status" value="1"/>
</dbReference>
<dbReference type="Gene3D" id="3.40.50.150">
    <property type="entry name" value="Vaccinia Virus protein VP39"/>
    <property type="match status" value="1"/>
</dbReference>
<dbReference type="HAMAP" id="MF_01590">
    <property type="entry name" value="tRNA_carboxymethyltr_CmoB"/>
    <property type="match status" value="1"/>
</dbReference>
<dbReference type="InterPro" id="IPR010017">
    <property type="entry name" value="CmoB"/>
</dbReference>
<dbReference type="InterPro" id="IPR027555">
    <property type="entry name" value="Mo5U34_MeTrfas-like"/>
</dbReference>
<dbReference type="InterPro" id="IPR029063">
    <property type="entry name" value="SAM-dependent_MTases_sf"/>
</dbReference>
<dbReference type="NCBIfam" id="NF011650">
    <property type="entry name" value="PRK15068.1"/>
    <property type="match status" value="1"/>
</dbReference>
<dbReference type="NCBIfam" id="TIGR00452">
    <property type="entry name" value="tRNA 5-methoxyuridine(34)/uridine 5-oxyacetic acid(34) synthase CmoB"/>
    <property type="match status" value="1"/>
</dbReference>
<dbReference type="PANTHER" id="PTHR43464">
    <property type="entry name" value="METHYLTRANSFERASE"/>
    <property type="match status" value="1"/>
</dbReference>
<dbReference type="PANTHER" id="PTHR43464:SF95">
    <property type="entry name" value="TRNA U34 CARBOXYMETHYLTRANSFERASE"/>
    <property type="match status" value="1"/>
</dbReference>
<dbReference type="Pfam" id="PF08003">
    <property type="entry name" value="Methyltransf_9"/>
    <property type="match status" value="1"/>
</dbReference>
<dbReference type="SUPFAM" id="SSF53335">
    <property type="entry name" value="S-adenosyl-L-methionine-dependent methyltransferases"/>
    <property type="match status" value="1"/>
</dbReference>
<organism>
    <name type="scientific">Shewanella woodyi (strain ATCC 51908 / MS32)</name>
    <dbReference type="NCBI Taxonomy" id="392500"/>
    <lineage>
        <taxon>Bacteria</taxon>
        <taxon>Pseudomonadati</taxon>
        <taxon>Pseudomonadota</taxon>
        <taxon>Gammaproteobacteria</taxon>
        <taxon>Alteromonadales</taxon>
        <taxon>Shewanellaceae</taxon>
        <taxon>Shewanella</taxon>
    </lineage>
</organism>
<gene>
    <name evidence="1" type="primary">cmoB</name>
    <name type="ordered locus">Swoo_2578</name>
</gene>
<evidence type="ECO:0000255" key="1">
    <source>
        <dbReference type="HAMAP-Rule" id="MF_01590"/>
    </source>
</evidence>
<feature type="chain" id="PRO_1000201313" description="tRNA U34 carboxymethyltransferase">
    <location>
        <begin position="1"/>
        <end position="330"/>
    </location>
</feature>
<feature type="binding site" evidence="1">
    <location>
        <position position="91"/>
    </location>
    <ligand>
        <name>carboxy-S-adenosyl-L-methionine</name>
        <dbReference type="ChEBI" id="CHEBI:134278"/>
    </ligand>
</feature>
<feature type="binding site" evidence="1">
    <location>
        <position position="105"/>
    </location>
    <ligand>
        <name>carboxy-S-adenosyl-L-methionine</name>
        <dbReference type="ChEBI" id="CHEBI:134278"/>
    </ligand>
</feature>
<feature type="binding site" evidence="1">
    <location>
        <position position="110"/>
    </location>
    <ligand>
        <name>carboxy-S-adenosyl-L-methionine</name>
        <dbReference type="ChEBI" id="CHEBI:134278"/>
    </ligand>
</feature>
<feature type="binding site" evidence="1">
    <location>
        <position position="130"/>
    </location>
    <ligand>
        <name>carboxy-S-adenosyl-L-methionine</name>
        <dbReference type="ChEBI" id="CHEBI:134278"/>
    </ligand>
</feature>
<feature type="binding site" evidence="1">
    <location>
        <begin position="152"/>
        <end position="154"/>
    </location>
    <ligand>
        <name>carboxy-S-adenosyl-L-methionine</name>
        <dbReference type="ChEBI" id="CHEBI:134278"/>
    </ligand>
</feature>
<feature type="binding site" evidence="1">
    <location>
        <begin position="181"/>
        <end position="182"/>
    </location>
    <ligand>
        <name>carboxy-S-adenosyl-L-methionine</name>
        <dbReference type="ChEBI" id="CHEBI:134278"/>
    </ligand>
</feature>
<feature type="binding site" evidence="1">
    <location>
        <position position="196"/>
    </location>
    <ligand>
        <name>carboxy-S-adenosyl-L-methionine</name>
        <dbReference type="ChEBI" id="CHEBI:134278"/>
    </ligand>
</feature>
<feature type="binding site" evidence="1">
    <location>
        <position position="200"/>
    </location>
    <ligand>
        <name>carboxy-S-adenosyl-L-methionine</name>
        <dbReference type="ChEBI" id="CHEBI:134278"/>
    </ligand>
</feature>
<feature type="binding site" evidence="1">
    <location>
        <position position="315"/>
    </location>
    <ligand>
        <name>carboxy-S-adenosyl-L-methionine</name>
        <dbReference type="ChEBI" id="CHEBI:134278"/>
    </ligand>
</feature>
<keyword id="KW-1185">Reference proteome</keyword>
<keyword id="KW-0808">Transferase</keyword>
<keyword id="KW-0819">tRNA processing</keyword>
<sequence length="330" mass="37637">MISFSSFYKKIADSSLQHWLETLPAILGQWQREHKHGTLPKWEKVLNKLHYPNPDTLELKDSVTIGSGQQLTSGEQQKLENLLRIFQPWRKGPFSVHGINIDTEWRSDWKWERILPHLSPLNNRTVLDVGCGSGYHMWRMLGEGANHVVGIDPSTLFLCQFEAIKRLAGEEQPIHLLPLGIEELPPLDAFDTVFSMGVLYHRRSPIDHLLQLRDQLRTGGELVLETLVIDGDENTVLVPEDRYGKMNNVWFLPSAAALALWLKKADFVDIRCVDIDVTSLAEQRSTDWMPNESLVDYLDPSNIDLTVEGYPAPKRATFIATKNQPNKDLI</sequence>